<organism>
    <name type="scientific">Homo sapiens</name>
    <name type="common">Human</name>
    <dbReference type="NCBI Taxonomy" id="9606"/>
    <lineage>
        <taxon>Eukaryota</taxon>
        <taxon>Metazoa</taxon>
        <taxon>Chordata</taxon>
        <taxon>Craniata</taxon>
        <taxon>Vertebrata</taxon>
        <taxon>Euteleostomi</taxon>
        <taxon>Mammalia</taxon>
        <taxon>Eutheria</taxon>
        <taxon>Euarchontoglires</taxon>
        <taxon>Primates</taxon>
        <taxon>Haplorrhini</taxon>
        <taxon>Catarrhini</taxon>
        <taxon>Hominidae</taxon>
        <taxon>Homo</taxon>
    </lineage>
</organism>
<proteinExistence type="evidence at protein level"/>
<sequence length="162" mass="18291">MGLETEKADVQLFMDDDSYSHHSGLEYADPEKFADSDQDRDPHRLNSHLKLGFEDVIAEPVTTHSFDKVWICSHALFEISKYVMYKFLTVFLAIPLAFIAGILFATLSCLHIWILMPFVKTCLMVLPSVQTIWKSVTDVIIAPLCTSVGRCFSSVSLQLSQD</sequence>
<comment type="function">
    <text evidence="1 5 6">May act as a scaffolding protein within caveolar membranes. Interacts directly with G-protein alpha subunits and can functionally regulate their activity. Acts as an accessory protein in conjunction with CAV1 in targeting to lipid rafts and driving caveolae formation. The Ser-36 phosphorylated form has a role in modulating mitosis in endothelial cells. Positive regulator of cellular mitogenesis of the MAPK signaling pathway. Required for the insulin-stimulated nuclear translocation and activation of MAPK1 and STAT3, and the subsequent regulation of cell cycle progression (By similarity).</text>
</comment>
<comment type="subunit">
    <text evidence="1">Monomer or homodimer. Interacts with CAV1; the interaction forms a stable heterooligomeric complex that is required for targeting to lipid rafts and for caveolae formation. Tyrosine phosphorylated forms do not form heterooligomers with the Tyr-19-phosphorylated form existing as a monomer or dimer, and the Tyr-27-form as a monomer only. Interacts (tyrosine phosphorylated form) with the SH2 domain-containing proteins, RASA1, NCK1 and SRC. Interacts (tyrosine phosphorylated form) with INSR, the interaction (Tyr-27-phosphorylated form) is increased on insulin stimulation. Interacts (Tyr-19 phosphorylated form) with MAPK1 (phosphorylated form); the interaction, promoted by insulin, leads to nuclear location and MAPK1 activation. Interacts with STAT3; the interaction is increased on insulin-induced tyrosine phosphorylation leading to STAT activation (By similarity).</text>
</comment>
<comment type="interaction">
    <interactant intactId="EBI-603607">
        <id>P51636</id>
    </interactant>
    <interactant intactId="EBI-603614">
        <id>Q03135</id>
        <label>CAV1</label>
    </interactant>
    <organismsDiffer>false</organismsDiffer>
    <experiments>5</experiments>
</comment>
<comment type="interaction">
    <interactant intactId="EBI-603607">
        <id>P51636</id>
    </interactant>
    <interactant intactId="EBI-297353">
        <id>P00533</id>
        <label>EGFR</label>
    </interactant>
    <organismsDiffer>false</organismsDiffer>
    <experiments>3</experiments>
</comment>
<comment type="interaction">
    <interactant intactId="EBI-603607">
        <id>P51636</id>
    </interactant>
    <interactant intactId="EBI-727004">
        <id>O00560</id>
        <label>SDCBP</label>
    </interactant>
    <organismsDiffer>false</organismsDiffer>
    <experiments>3</experiments>
</comment>
<comment type="subcellular location">
    <subcellularLocation>
        <location>Nucleus</location>
    </subcellularLocation>
    <subcellularLocation>
        <location>Cytoplasm</location>
    </subcellularLocation>
    <subcellularLocation>
        <location>Golgi apparatus membrane</location>
        <topology>Peripheral membrane protein</topology>
    </subcellularLocation>
    <subcellularLocation>
        <location>Cell membrane</location>
        <topology>Peripheral membrane protein</topology>
    </subcellularLocation>
    <subcellularLocation>
        <location>Membrane</location>
        <location>Caveola</location>
        <topology>Peripheral membrane protein</topology>
    </subcellularLocation>
    <text evidence="1">Potential hairpin-like structure in the membrane. Membrane protein of caveolae. Tyr-19-phosphorylated form is enriched at sites of cell-cell contact and is translocated to the nucleus in complex with MAPK1 in response to insulin (By similarity). Tyr-27-phosphorylated form is located both in the cytoplasm and plasma membrane. CAV1-mediated Ser-23-phosphorylated form locates to the plasma membrane. Ser-36-phosphorylated form resides in intracellular compartments.</text>
</comment>
<comment type="alternative products">
    <event type="alternative splicing"/>
    <event type="alternative initiation"/>
    <isoform>
        <id>P51636-1</id>
        <name>Alpha</name>
        <sequence type="displayed"/>
    </isoform>
    <isoform>
        <id>P51636-2</id>
        <name>Beta</name>
        <sequence type="described" ref="VSP_018696"/>
    </isoform>
    <isoform>
        <id>P51636-3</id>
        <name>C</name>
        <sequence type="described" ref="VSP_038114 VSP_038115"/>
    </isoform>
</comment>
<comment type="tissue specificity">
    <text evidence="7">Expressed in endothelial cells, smooth muscle cells, skeletal myoblasts and fibroblasts.</text>
</comment>
<comment type="PTM">
    <text evidence="1">Phosphorylated on serine and tyrosine residues. CAV1 promotes phosphorylation on Ser-23 which then targets the complex to the plasma membrane, lipid rafts and caveolae. Phosphorylation on Ser-36 appears to modulate mitosis in endothelial cells (By similarity). Phosphorylation on both Tyr-19 and Tyr-27 is required for insulin-induced 'Ser-727' phosphorylation of STAT3 and its activation. Phosphorylation on Tyr-19 is required for insulin-induced phosphorylation of MAPK1 and DNA binding of STAT3. Tyrosine phosphorylation is induced by both EGF and insulin (By similarity).</text>
</comment>
<comment type="miscellaneous">
    <molecule>Isoform Beta</molecule>
    <text evidence="9">Produced by alternative initiation.</text>
</comment>
<comment type="miscellaneous">
    <molecule>Isoform C</molecule>
    <text evidence="9">Produced by alternative splicing.</text>
</comment>
<comment type="similarity">
    <text evidence="9">Belongs to the caveolin family.</text>
</comment>
<comment type="online information" name="Wikipedia">
    <link uri="https://en.wikipedia.org/wiki/Caveolin"/>
    <text>Caveolin entry</text>
</comment>
<evidence type="ECO:0000250" key="1"/>
<evidence type="ECO:0000250" key="2">
    <source>
        <dbReference type="UniProtKB" id="Q9WVC3"/>
    </source>
</evidence>
<evidence type="ECO:0000255" key="3"/>
<evidence type="ECO:0000269" key="4">
    <source>
    </source>
</evidence>
<evidence type="ECO:0000269" key="5">
    <source>
    </source>
</evidence>
<evidence type="ECO:0000269" key="6">
    <source>
    </source>
</evidence>
<evidence type="ECO:0000269" key="7">
    <source>
    </source>
</evidence>
<evidence type="ECO:0000303" key="8">
    <source>
    </source>
</evidence>
<evidence type="ECO:0000305" key="9"/>
<name>CAV2_HUMAN</name>
<accession>P51636</accession>
<accession>A4D0U2</accession>
<accession>Q9UGM7</accession>
<reference key="1">
    <citation type="journal article" date="1996" name="Proc. Natl. Acad. Sci. U.S.A.">
        <title>Identification, sequence, and expression of caveolin-2 defines a caveolin gene family.</title>
        <authorList>
            <person name="Scherer P.E."/>
            <person name="Okamoto T."/>
            <person name="Chun M."/>
            <person name="Nishimoto I."/>
            <person name="Lodish H.F."/>
            <person name="Lisanti M.P."/>
        </authorList>
    </citation>
    <scope>NUCLEOTIDE SEQUENCE [MRNA] (ISOFORM ALPHA)</scope>
</reference>
<reference key="2">
    <citation type="journal article" date="1997" name="J. Biol. Chem.">
        <title>Cell-type and tissue-specific expression of caveolin-2. Caveolins 1 and 2 co-localize and form a stable hetero-oligomeric complex in vivo.</title>
        <authorList>
            <person name="Scherer P.E."/>
            <person name="Lewis R.Y."/>
            <person name="Volonte D."/>
            <person name="Engelman J.A."/>
            <person name="Galbiati F."/>
            <person name="Couet J."/>
            <person name="Kohtz D.S."/>
            <person name="van Donselaar E."/>
            <person name="Peters P."/>
            <person name="Lisanti M.P."/>
        </authorList>
    </citation>
    <scope>NUCLEOTIDE SEQUENCE [MRNA] (ISOFORM ALPHA)</scope>
    <scope>INTERACTION WITH CAV1</scope>
    <scope>SUBCELLULAR LOCATION</scope>
    <scope>TISSUE SPECIFICITY</scope>
</reference>
<reference key="3">
    <citation type="journal article" date="1999" name="FEBS Lett.">
        <title>Sequence and detailed organization of the human caveolin-1 and -2 genes located near the D7S522 locus (7q31.1). Methylation of a CpG island in the 5' promoter region of the caveolin-1 gene in human breast cancer cell lines.</title>
        <authorList>
            <person name="Engelman J.A."/>
            <person name="Zhang X.L."/>
            <person name="Lisanti M.P."/>
        </authorList>
    </citation>
    <scope>NUCLEOTIDE SEQUENCE [GENOMIC DNA]</scope>
</reference>
<reference key="4">
    <citation type="submission" date="2003-05" db="EMBL/GenBank/DDBJ databases">
        <title>Cloning of human full-length CDSs in BD Creator(TM) system donor vector.</title>
        <authorList>
            <person name="Kalnine N."/>
            <person name="Chen X."/>
            <person name="Rolfs A."/>
            <person name="Halleck A."/>
            <person name="Hines L."/>
            <person name="Eisenstein S."/>
            <person name="Koundinya M."/>
            <person name="Raphael J."/>
            <person name="Moreira D."/>
            <person name="Kelley T."/>
            <person name="LaBaer J."/>
            <person name="Lin Y."/>
            <person name="Phelan M."/>
            <person name="Farmer A."/>
        </authorList>
    </citation>
    <scope>NUCLEOTIDE SEQUENCE [LARGE SCALE MRNA] (ISOFORM ALPHA)</scope>
</reference>
<reference key="5">
    <citation type="journal article" date="2004" name="Nat. Genet.">
        <title>Complete sequencing and characterization of 21,243 full-length human cDNAs.</title>
        <authorList>
            <person name="Ota T."/>
            <person name="Suzuki Y."/>
            <person name="Nishikawa T."/>
            <person name="Otsuki T."/>
            <person name="Sugiyama T."/>
            <person name="Irie R."/>
            <person name="Wakamatsu A."/>
            <person name="Hayashi K."/>
            <person name="Sato H."/>
            <person name="Nagai K."/>
            <person name="Kimura K."/>
            <person name="Makita H."/>
            <person name="Sekine M."/>
            <person name="Obayashi M."/>
            <person name="Nishi T."/>
            <person name="Shibahara T."/>
            <person name="Tanaka T."/>
            <person name="Ishii S."/>
            <person name="Yamamoto J."/>
            <person name="Saito K."/>
            <person name="Kawai Y."/>
            <person name="Isono Y."/>
            <person name="Nakamura Y."/>
            <person name="Nagahari K."/>
            <person name="Murakami K."/>
            <person name="Yasuda T."/>
            <person name="Iwayanagi T."/>
            <person name="Wagatsuma M."/>
            <person name="Shiratori A."/>
            <person name="Sudo H."/>
            <person name="Hosoiri T."/>
            <person name="Kaku Y."/>
            <person name="Kodaira H."/>
            <person name="Kondo H."/>
            <person name="Sugawara M."/>
            <person name="Takahashi M."/>
            <person name="Kanda K."/>
            <person name="Yokoi T."/>
            <person name="Furuya T."/>
            <person name="Kikkawa E."/>
            <person name="Omura Y."/>
            <person name="Abe K."/>
            <person name="Kamihara K."/>
            <person name="Katsuta N."/>
            <person name="Sato K."/>
            <person name="Tanikawa M."/>
            <person name="Yamazaki M."/>
            <person name="Ninomiya K."/>
            <person name="Ishibashi T."/>
            <person name="Yamashita H."/>
            <person name="Murakawa K."/>
            <person name="Fujimori K."/>
            <person name="Tanai H."/>
            <person name="Kimata M."/>
            <person name="Watanabe M."/>
            <person name="Hiraoka S."/>
            <person name="Chiba Y."/>
            <person name="Ishida S."/>
            <person name="Ono Y."/>
            <person name="Takiguchi S."/>
            <person name="Watanabe S."/>
            <person name="Yosida M."/>
            <person name="Hotuta T."/>
            <person name="Kusano J."/>
            <person name="Kanehori K."/>
            <person name="Takahashi-Fujii A."/>
            <person name="Hara H."/>
            <person name="Tanase T.-O."/>
            <person name="Nomura Y."/>
            <person name="Togiya S."/>
            <person name="Komai F."/>
            <person name="Hara R."/>
            <person name="Takeuchi K."/>
            <person name="Arita M."/>
            <person name="Imose N."/>
            <person name="Musashino K."/>
            <person name="Yuuki H."/>
            <person name="Oshima A."/>
            <person name="Sasaki N."/>
            <person name="Aotsuka S."/>
            <person name="Yoshikawa Y."/>
            <person name="Matsunawa H."/>
            <person name="Ichihara T."/>
            <person name="Shiohata N."/>
            <person name="Sano S."/>
            <person name="Moriya S."/>
            <person name="Momiyama H."/>
            <person name="Satoh N."/>
            <person name="Takami S."/>
            <person name="Terashima Y."/>
            <person name="Suzuki O."/>
            <person name="Nakagawa S."/>
            <person name="Senoh A."/>
            <person name="Mizoguchi H."/>
            <person name="Goto Y."/>
            <person name="Shimizu F."/>
            <person name="Wakebe H."/>
            <person name="Hishigaki H."/>
            <person name="Watanabe T."/>
            <person name="Sugiyama A."/>
            <person name="Takemoto M."/>
            <person name="Kawakami B."/>
            <person name="Yamazaki M."/>
            <person name="Watanabe K."/>
            <person name="Kumagai A."/>
            <person name="Itakura S."/>
            <person name="Fukuzumi Y."/>
            <person name="Fujimori Y."/>
            <person name="Komiyama M."/>
            <person name="Tashiro H."/>
            <person name="Tanigami A."/>
            <person name="Fujiwara T."/>
            <person name="Ono T."/>
            <person name="Yamada K."/>
            <person name="Fujii Y."/>
            <person name="Ozaki K."/>
            <person name="Hirao M."/>
            <person name="Ohmori Y."/>
            <person name="Kawabata A."/>
            <person name="Hikiji T."/>
            <person name="Kobatake N."/>
            <person name="Inagaki H."/>
            <person name="Ikema Y."/>
            <person name="Okamoto S."/>
            <person name="Okitani R."/>
            <person name="Kawakami T."/>
            <person name="Noguchi S."/>
            <person name="Itoh T."/>
            <person name="Shigeta K."/>
            <person name="Senba T."/>
            <person name="Matsumura K."/>
            <person name="Nakajima Y."/>
            <person name="Mizuno T."/>
            <person name="Morinaga M."/>
            <person name="Sasaki M."/>
            <person name="Togashi T."/>
            <person name="Oyama M."/>
            <person name="Hata H."/>
            <person name="Watanabe M."/>
            <person name="Komatsu T."/>
            <person name="Mizushima-Sugano J."/>
            <person name="Satoh T."/>
            <person name="Shirai Y."/>
            <person name="Takahashi Y."/>
            <person name="Nakagawa K."/>
            <person name="Okumura K."/>
            <person name="Nagase T."/>
            <person name="Nomura N."/>
            <person name="Kikuchi H."/>
            <person name="Masuho Y."/>
            <person name="Yamashita R."/>
            <person name="Nakai K."/>
            <person name="Yada T."/>
            <person name="Nakamura Y."/>
            <person name="Ohara O."/>
            <person name="Isogai T."/>
            <person name="Sugano S."/>
        </authorList>
    </citation>
    <scope>NUCLEOTIDE SEQUENCE [LARGE SCALE MRNA] (ISOFORM C)</scope>
    <source>
        <tissue>Hepatoma</tissue>
    </source>
</reference>
<reference key="6">
    <citation type="journal article" date="2003" name="Science">
        <title>Human chromosome 7: DNA sequence and biology.</title>
        <authorList>
            <person name="Scherer S.W."/>
            <person name="Cheung J."/>
            <person name="MacDonald J.R."/>
            <person name="Osborne L.R."/>
            <person name="Nakabayashi K."/>
            <person name="Herbrick J.-A."/>
            <person name="Carson A.R."/>
            <person name="Parker-Katiraee L."/>
            <person name="Skaug J."/>
            <person name="Khaja R."/>
            <person name="Zhang J."/>
            <person name="Hudek A.K."/>
            <person name="Li M."/>
            <person name="Haddad M."/>
            <person name="Duggan G.E."/>
            <person name="Fernandez B.A."/>
            <person name="Kanematsu E."/>
            <person name="Gentles S."/>
            <person name="Christopoulos C.C."/>
            <person name="Choufani S."/>
            <person name="Kwasnicka D."/>
            <person name="Zheng X.H."/>
            <person name="Lai Z."/>
            <person name="Nusskern D.R."/>
            <person name="Zhang Q."/>
            <person name="Gu Z."/>
            <person name="Lu F."/>
            <person name="Zeesman S."/>
            <person name="Nowaczyk M.J."/>
            <person name="Teshima I."/>
            <person name="Chitayat D."/>
            <person name="Shuman C."/>
            <person name="Weksberg R."/>
            <person name="Zackai E.H."/>
            <person name="Grebe T.A."/>
            <person name="Cox S.R."/>
            <person name="Kirkpatrick S.J."/>
            <person name="Rahman N."/>
            <person name="Friedman J.M."/>
            <person name="Heng H.H.Q."/>
            <person name="Pelicci P.G."/>
            <person name="Lo-Coco F."/>
            <person name="Belloni E."/>
            <person name="Shaffer L.G."/>
            <person name="Pober B."/>
            <person name="Morton C.C."/>
            <person name="Gusella J.F."/>
            <person name="Bruns G.A.P."/>
            <person name="Korf B.R."/>
            <person name="Quade B.J."/>
            <person name="Ligon A.H."/>
            <person name="Ferguson H."/>
            <person name="Higgins A.W."/>
            <person name="Leach N.T."/>
            <person name="Herrick S.R."/>
            <person name="Lemyre E."/>
            <person name="Farra C.G."/>
            <person name="Kim H.-G."/>
            <person name="Summers A.M."/>
            <person name="Gripp K.W."/>
            <person name="Roberts W."/>
            <person name="Szatmari P."/>
            <person name="Winsor E.J.T."/>
            <person name="Grzeschik K.-H."/>
            <person name="Teebi A."/>
            <person name="Minassian B.A."/>
            <person name="Kere J."/>
            <person name="Armengol L."/>
            <person name="Pujana M.A."/>
            <person name="Estivill X."/>
            <person name="Wilson M.D."/>
            <person name="Koop B.F."/>
            <person name="Tosi S."/>
            <person name="Moore G.E."/>
            <person name="Boright A.P."/>
            <person name="Zlotorynski E."/>
            <person name="Kerem B."/>
            <person name="Kroisel P.M."/>
            <person name="Petek E."/>
            <person name="Oscier D.G."/>
            <person name="Mould S.J."/>
            <person name="Doehner H."/>
            <person name="Doehner K."/>
            <person name="Rommens J.M."/>
            <person name="Vincent J.B."/>
            <person name="Venter J.C."/>
            <person name="Li P.W."/>
            <person name="Mural R.J."/>
            <person name="Adams M.D."/>
            <person name="Tsui L.-C."/>
        </authorList>
    </citation>
    <scope>NUCLEOTIDE SEQUENCE [LARGE SCALE GENOMIC DNA]</scope>
</reference>
<reference key="7">
    <citation type="journal article" date="2004" name="Genome Res.">
        <title>The status, quality, and expansion of the NIH full-length cDNA project: the Mammalian Gene Collection (MGC).</title>
        <authorList>
            <consortium name="The MGC Project Team"/>
        </authorList>
    </citation>
    <scope>NUCLEOTIDE SEQUENCE [LARGE SCALE MRNA] (ISOFORM ALPHA)</scope>
    <source>
        <tissue>Kidney</tissue>
    </source>
</reference>
<reference key="8">
    <citation type="journal article" date="1998" name="FEBS Lett.">
        <title>Mutational analysis of caveolin-induced vesicle formation. Expression of caveolin-1 recruits caveolin-2 to caveolae membranes.</title>
        <authorList>
            <person name="Li S."/>
            <person name="Galbiati F."/>
            <person name="Volonte D."/>
            <person name="Sargiacomo M."/>
            <person name="Engelman J.A."/>
            <person name="Das K."/>
            <person name="Scherer P.E."/>
            <person name="Lisanti M.P."/>
        </authorList>
    </citation>
    <scope>INTERACTION WITH CAV1</scope>
    <scope>ALTERNATIVE PRODUCTS</scope>
    <scope>SUBCELLULAR LOCATION</scope>
</reference>
<reference key="9">
    <citation type="journal article" date="2002" name="J. Biol. Chem.">
        <title>Src-induced phosphorylation of caveolin-2 on tyrosine 19. Phospho-caveolin-2 (Tyr(P)19) is localized near focal adhesions, remains associated with lipid rafts/caveolae, but no longer forms a high molecular mass hetero-oligomer with caveolin-1.</title>
        <authorList>
            <person name="Lee H."/>
            <person name="Park D.S."/>
            <person name="Wang X.B."/>
            <person name="Scherer P.E."/>
            <person name="Schwartz P.E."/>
            <person name="Lisanti M.P."/>
        </authorList>
    </citation>
    <scope>PHOSPHORYLATION AT TYR-19</scope>
    <scope>SUBCELLULAR LOCATION</scope>
    <scope>INTERACTION WITH CAV1; SRC; RASA1 AND NCK1</scope>
</reference>
<reference key="10">
    <citation type="journal article" date="2004" name="Biochemistry">
        <title>Tyrosine phosphorylation of caveolin-2 at residue 27: differences in the spatial and temporal behavior of phospho-Cav-2 (pY19 and pY27).</title>
        <authorList>
            <person name="Wang X.B."/>
            <person name="Lee H."/>
            <person name="Capozza F."/>
            <person name="Marmon S."/>
            <person name="Sotgia F."/>
            <person name="Brooks J.W."/>
            <person name="Campos-Gonzalez R."/>
            <person name="Lisanti M.P."/>
        </authorList>
    </citation>
    <scope>PHOSPHORYLATION AT TYR-19 AND TYR-27</scope>
    <scope>SUBCELLULAR LOCATION</scope>
    <scope>INTERACTION WITH CAV1; NCK1; RASA1 AND SRC</scope>
    <scope>FUNCTION</scope>
    <scope>MUTAGENESIS OF TYR-19 AND TYR-27</scope>
</reference>
<reference key="11">
    <citation type="journal article" date="2008" name="Biochemistry">
        <title>Serine 23 and 36 phosphorylation of caveolin-2 is differentially regulated by targeting to lipid raft/caveolae and in mitotic endothelial cells.</title>
        <authorList>
            <person name="Sowa G."/>
            <person name="Xie L."/>
            <person name="Xu L."/>
            <person name="Sessa W.C."/>
        </authorList>
    </citation>
    <scope>PHOSPHORYLATION AT SER-23 AND SER-36</scope>
    <scope>FUNCTION</scope>
    <scope>SUBCELLULAR LOCATION</scope>
    <scope>MUTAGENESIS OF SER-23 AND SER-36</scope>
</reference>
<reference key="12">
    <citation type="journal article" date="2008" name="Proc. Natl. Acad. Sci. U.S.A.">
        <title>A quantitative atlas of mitotic phosphorylation.</title>
        <authorList>
            <person name="Dephoure N."/>
            <person name="Zhou C."/>
            <person name="Villen J."/>
            <person name="Beausoleil S.A."/>
            <person name="Bakalarski C.E."/>
            <person name="Elledge S.J."/>
            <person name="Gygi S.P."/>
        </authorList>
    </citation>
    <scope>IDENTIFICATION BY MASS SPECTROMETRY [LARGE SCALE ANALYSIS]</scope>
    <source>
        <tissue>Cervix carcinoma</tissue>
    </source>
</reference>
<reference key="13">
    <citation type="journal article" date="2011" name="BMC Syst. Biol.">
        <title>Initial characterization of the human central proteome.</title>
        <authorList>
            <person name="Burkard T.R."/>
            <person name="Planyavsky M."/>
            <person name="Kaupe I."/>
            <person name="Breitwieser F.P."/>
            <person name="Buerckstuemmer T."/>
            <person name="Bennett K.L."/>
            <person name="Superti-Furga G."/>
            <person name="Colinge J."/>
        </authorList>
    </citation>
    <scope>IDENTIFICATION BY MASS SPECTROMETRY [LARGE SCALE ANALYSIS]</scope>
</reference>
<reference key="14">
    <citation type="journal article" date="2014" name="J. Proteomics">
        <title>An enzyme assisted RP-RPLC approach for in-depth analysis of human liver phosphoproteome.</title>
        <authorList>
            <person name="Bian Y."/>
            <person name="Song C."/>
            <person name="Cheng K."/>
            <person name="Dong M."/>
            <person name="Wang F."/>
            <person name="Huang J."/>
            <person name="Sun D."/>
            <person name="Wang L."/>
            <person name="Ye M."/>
            <person name="Zou H."/>
        </authorList>
    </citation>
    <scope>IDENTIFICATION BY MASS SPECTROMETRY [LARGE SCALE ANALYSIS]</scope>
    <source>
        <tissue>Liver</tissue>
    </source>
</reference>
<dbReference type="EMBL" id="AF035752">
    <property type="protein sequence ID" value="AAB88492.1"/>
    <property type="molecule type" value="mRNA"/>
</dbReference>
<dbReference type="EMBL" id="AJ133269">
    <property type="protein sequence ID" value="CAB63653.1"/>
    <property type="molecule type" value="Genomic_DNA"/>
</dbReference>
<dbReference type="EMBL" id="BT007051">
    <property type="protein sequence ID" value="AAP35700.1"/>
    <property type="molecule type" value="mRNA"/>
</dbReference>
<dbReference type="EMBL" id="BC005256">
    <property type="protein sequence ID" value="AAH05256.1"/>
    <property type="molecule type" value="mRNA"/>
</dbReference>
<dbReference type="EMBL" id="AJ242718">
    <property type="protein sequence ID" value="CAB65090.1"/>
    <property type="molecule type" value="Genomic_DNA"/>
</dbReference>
<dbReference type="EMBL" id="AK310786">
    <property type="status" value="NOT_ANNOTATED_CDS"/>
    <property type="molecule type" value="mRNA"/>
</dbReference>
<dbReference type="EMBL" id="CH236947">
    <property type="protein sequence ID" value="EAL24361.1"/>
    <property type="molecule type" value="Genomic_DNA"/>
</dbReference>
<dbReference type="CCDS" id="CCDS5765.1">
    <molecule id="P51636-3"/>
</dbReference>
<dbReference type="CCDS" id="CCDS5766.1">
    <molecule id="P51636-1"/>
</dbReference>
<dbReference type="RefSeq" id="NP_001193676.1">
    <molecule id="P51636-2"/>
    <property type="nucleotide sequence ID" value="NM_001206747.2"/>
</dbReference>
<dbReference type="RefSeq" id="NP_001193677.1">
    <property type="nucleotide sequence ID" value="NM_001206748.1"/>
</dbReference>
<dbReference type="RefSeq" id="NP_001224.1">
    <molecule id="P51636-1"/>
    <property type="nucleotide sequence ID" value="NM_001233.5"/>
</dbReference>
<dbReference type="RefSeq" id="NP_937855.1">
    <molecule id="P51636-3"/>
    <property type="nucleotide sequence ID" value="NM_198212.3"/>
</dbReference>
<dbReference type="SMR" id="P51636"/>
<dbReference type="BioGRID" id="107306">
    <property type="interactions" value="133"/>
</dbReference>
<dbReference type="DIP" id="DIP-34929N"/>
<dbReference type="FunCoup" id="P51636">
    <property type="interactions" value="920"/>
</dbReference>
<dbReference type="IntAct" id="P51636">
    <property type="interactions" value="97"/>
</dbReference>
<dbReference type="MINT" id="P51636"/>
<dbReference type="STRING" id="9606.ENSP00000222693"/>
<dbReference type="TCDB" id="8.A.104.1.11">
    <property type="family name" value="the 5'-amp-activated protein kinase (ampk) family"/>
</dbReference>
<dbReference type="GlyGen" id="P51636">
    <property type="glycosylation" value="1 site"/>
</dbReference>
<dbReference type="iPTMnet" id="P51636"/>
<dbReference type="PhosphoSitePlus" id="P51636"/>
<dbReference type="SwissPalm" id="P51636"/>
<dbReference type="BioMuta" id="CAV2"/>
<dbReference type="jPOST" id="P51636"/>
<dbReference type="MassIVE" id="P51636"/>
<dbReference type="PaxDb" id="9606-ENSP00000222693"/>
<dbReference type="PeptideAtlas" id="P51636"/>
<dbReference type="ProteomicsDB" id="56353">
    <molecule id="P51636-1"/>
</dbReference>
<dbReference type="ProteomicsDB" id="56354">
    <molecule id="P51636-2"/>
</dbReference>
<dbReference type="ProteomicsDB" id="56355">
    <molecule id="P51636-3"/>
</dbReference>
<dbReference type="Pumba" id="P51636"/>
<dbReference type="Antibodypedia" id="4606">
    <property type="antibodies" value="414 antibodies from 38 providers"/>
</dbReference>
<dbReference type="DNASU" id="858"/>
<dbReference type="Ensembl" id="ENST00000222693.5">
    <molecule id="P51636-1"/>
    <property type="protein sequence ID" value="ENSP00000222693.4"/>
    <property type="gene ID" value="ENSG00000105971.15"/>
</dbReference>
<dbReference type="Ensembl" id="ENST00000343213.2">
    <molecule id="P51636-3"/>
    <property type="protein sequence ID" value="ENSP00000345679.2"/>
    <property type="gene ID" value="ENSG00000105971.15"/>
</dbReference>
<dbReference type="GeneID" id="858"/>
<dbReference type="KEGG" id="hsa:858"/>
<dbReference type="MANE-Select" id="ENST00000222693.5">
    <property type="protein sequence ID" value="ENSP00000222693.4"/>
    <property type="RefSeq nucleotide sequence ID" value="NM_001233.5"/>
    <property type="RefSeq protein sequence ID" value="NP_001224.1"/>
</dbReference>
<dbReference type="UCSC" id="uc003vie.4">
    <molecule id="P51636-1"/>
    <property type="organism name" value="human"/>
</dbReference>
<dbReference type="AGR" id="HGNC:1528"/>
<dbReference type="CTD" id="858"/>
<dbReference type="DisGeNET" id="858"/>
<dbReference type="GeneCards" id="CAV2"/>
<dbReference type="HGNC" id="HGNC:1528">
    <property type="gene designation" value="CAV2"/>
</dbReference>
<dbReference type="HPA" id="ENSG00000105971">
    <property type="expression patterns" value="Tissue enhanced (adipose)"/>
</dbReference>
<dbReference type="MIM" id="601048">
    <property type="type" value="gene"/>
</dbReference>
<dbReference type="neXtProt" id="NX_P51636"/>
<dbReference type="OpenTargets" id="ENSG00000105971"/>
<dbReference type="PharmGKB" id="PA26108"/>
<dbReference type="VEuPathDB" id="HostDB:ENSG00000105971"/>
<dbReference type="eggNOG" id="ENOG502RZYX">
    <property type="taxonomic scope" value="Eukaryota"/>
</dbReference>
<dbReference type="GeneTree" id="ENSGT00950000183006"/>
<dbReference type="HOGENOM" id="CLU_2145024_0_0_1"/>
<dbReference type="InParanoid" id="P51636"/>
<dbReference type="OMA" id="TRIFMDD"/>
<dbReference type="OrthoDB" id="5917823at2759"/>
<dbReference type="PAN-GO" id="P51636">
    <property type="GO annotations" value="14 GO annotations based on evolutionary models"/>
</dbReference>
<dbReference type="PhylomeDB" id="P51636"/>
<dbReference type="TreeFam" id="TF315736"/>
<dbReference type="PathwayCommons" id="P51636"/>
<dbReference type="Reactome" id="R-HSA-9009391">
    <property type="pathway name" value="Extra-nuclear estrogen signaling"/>
</dbReference>
<dbReference type="SignaLink" id="P51636"/>
<dbReference type="SIGNOR" id="P51636"/>
<dbReference type="BioGRID-ORCS" id="858">
    <property type="hits" value="11 hits in 1158 CRISPR screens"/>
</dbReference>
<dbReference type="ChiTaRS" id="CAV2">
    <property type="organism name" value="human"/>
</dbReference>
<dbReference type="GeneWiki" id="Caveolin_2"/>
<dbReference type="GenomeRNAi" id="858"/>
<dbReference type="Pharos" id="P51636">
    <property type="development level" value="Tbio"/>
</dbReference>
<dbReference type="PRO" id="PR:P51636"/>
<dbReference type="Proteomes" id="UP000005640">
    <property type="component" value="Chromosome 7"/>
</dbReference>
<dbReference type="RNAct" id="P51636">
    <property type="molecule type" value="protein"/>
</dbReference>
<dbReference type="Bgee" id="ENSG00000105971">
    <property type="expression patterns" value="Expressed in lower lobe of lung and 212 other cell types or tissues"/>
</dbReference>
<dbReference type="ExpressionAtlas" id="P51636">
    <property type="expression patterns" value="baseline and differential"/>
</dbReference>
<dbReference type="GO" id="GO:0002080">
    <property type="term" value="C:acrosomal membrane"/>
    <property type="evidence" value="ECO:0007669"/>
    <property type="project" value="Ensembl"/>
</dbReference>
<dbReference type="GO" id="GO:0005901">
    <property type="term" value="C:caveola"/>
    <property type="evidence" value="ECO:0000314"/>
    <property type="project" value="BHF-UCL"/>
</dbReference>
<dbReference type="GO" id="GO:0002095">
    <property type="term" value="C:caveolar macromolecular signaling complex"/>
    <property type="evidence" value="ECO:0007669"/>
    <property type="project" value="Ensembl"/>
</dbReference>
<dbReference type="GO" id="GO:0031410">
    <property type="term" value="C:cytoplasmic vesicle"/>
    <property type="evidence" value="ECO:0000314"/>
    <property type="project" value="MGI"/>
</dbReference>
<dbReference type="GO" id="GO:0005925">
    <property type="term" value="C:focal adhesion"/>
    <property type="evidence" value="ECO:0007669"/>
    <property type="project" value="Ensembl"/>
</dbReference>
<dbReference type="GO" id="GO:0005794">
    <property type="term" value="C:Golgi apparatus"/>
    <property type="evidence" value="ECO:0000250"/>
    <property type="project" value="BHF-UCL"/>
</dbReference>
<dbReference type="GO" id="GO:0000139">
    <property type="term" value="C:Golgi membrane"/>
    <property type="evidence" value="ECO:0007669"/>
    <property type="project" value="UniProtKB-SubCell"/>
</dbReference>
<dbReference type="GO" id="GO:0045121">
    <property type="term" value="C:membrane raft"/>
    <property type="evidence" value="ECO:0000314"/>
    <property type="project" value="HGNC-UCL"/>
</dbReference>
<dbReference type="GO" id="GO:0005634">
    <property type="term" value="C:nucleus"/>
    <property type="evidence" value="ECO:0007669"/>
    <property type="project" value="UniProtKB-SubCell"/>
</dbReference>
<dbReference type="GO" id="GO:0048471">
    <property type="term" value="C:perinuclear region of cytoplasm"/>
    <property type="evidence" value="ECO:0000314"/>
    <property type="project" value="BHF-UCL"/>
</dbReference>
<dbReference type="GO" id="GO:0005886">
    <property type="term" value="C:plasma membrane"/>
    <property type="evidence" value="ECO:0000314"/>
    <property type="project" value="BHF-UCL"/>
</dbReference>
<dbReference type="GO" id="GO:0044853">
    <property type="term" value="C:plasma membrane raft"/>
    <property type="evidence" value="ECO:0000314"/>
    <property type="project" value="BHF-UCL"/>
</dbReference>
<dbReference type="GO" id="GO:0032991">
    <property type="term" value="C:protein-containing complex"/>
    <property type="evidence" value="ECO:0000314"/>
    <property type="project" value="MGI"/>
</dbReference>
<dbReference type="GO" id="GO:0030133">
    <property type="term" value="C:transport vesicle"/>
    <property type="evidence" value="ECO:0000314"/>
    <property type="project" value="LIFEdb"/>
</dbReference>
<dbReference type="GO" id="GO:0031748">
    <property type="term" value="F:D1 dopamine receptor binding"/>
    <property type="evidence" value="ECO:0000353"/>
    <property type="project" value="BHF-UCL"/>
</dbReference>
<dbReference type="GO" id="GO:0060090">
    <property type="term" value="F:molecular adaptor activity"/>
    <property type="evidence" value="ECO:0000318"/>
    <property type="project" value="GO_Central"/>
</dbReference>
<dbReference type="GO" id="GO:0046982">
    <property type="term" value="F:protein heterodimerization activity"/>
    <property type="evidence" value="ECO:0007669"/>
    <property type="project" value="Ensembl"/>
</dbReference>
<dbReference type="GO" id="GO:0042803">
    <property type="term" value="F:protein homodimerization activity"/>
    <property type="evidence" value="ECO:0000314"/>
    <property type="project" value="MGI"/>
</dbReference>
<dbReference type="GO" id="GO:0019901">
    <property type="term" value="F:protein kinase binding"/>
    <property type="evidence" value="ECO:0000318"/>
    <property type="project" value="GO_Central"/>
</dbReference>
<dbReference type="GO" id="GO:0030674">
    <property type="term" value="F:protein-macromolecule adaptor activity"/>
    <property type="evidence" value="ECO:0007669"/>
    <property type="project" value="Ensembl"/>
</dbReference>
<dbReference type="GO" id="GO:0097110">
    <property type="term" value="F:scaffold protein binding"/>
    <property type="evidence" value="ECO:0007669"/>
    <property type="project" value="Ensembl"/>
</dbReference>
<dbReference type="GO" id="GO:0071711">
    <property type="term" value="P:basement membrane organization"/>
    <property type="evidence" value="ECO:0007669"/>
    <property type="project" value="Ensembl"/>
</dbReference>
<dbReference type="GO" id="GO:0070836">
    <property type="term" value="P:caveola assembly"/>
    <property type="evidence" value="ECO:0000314"/>
    <property type="project" value="BHF-UCL"/>
</dbReference>
<dbReference type="GO" id="GO:0030154">
    <property type="term" value="P:cell differentiation"/>
    <property type="evidence" value="ECO:0000318"/>
    <property type="project" value="GO_Central"/>
</dbReference>
<dbReference type="GO" id="GO:0007029">
    <property type="term" value="P:endoplasmic reticulum organization"/>
    <property type="evidence" value="ECO:0000250"/>
    <property type="project" value="UniProtKB"/>
</dbReference>
<dbReference type="GO" id="GO:0001935">
    <property type="term" value="P:endothelial cell proliferation"/>
    <property type="evidence" value="ECO:0007669"/>
    <property type="project" value="Ensembl"/>
</dbReference>
<dbReference type="GO" id="GO:0008286">
    <property type="term" value="P:insulin receptor signaling pathway"/>
    <property type="evidence" value="ECO:0000314"/>
    <property type="project" value="BHF-UCL"/>
</dbReference>
<dbReference type="GO" id="GO:0007005">
    <property type="term" value="P:mitochondrion organization"/>
    <property type="evidence" value="ECO:0000250"/>
    <property type="project" value="UniProtKB"/>
</dbReference>
<dbReference type="GO" id="GO:0001937">
    <property type="term" value="P:negative regulation of endothelial cell proliferation"/>
    <property type="evidence" value="ECO:0000250"/>
    <property type="project" value="UniProtKB"/>
</dbReference>
<dbReference type="GO" id="GO:0014859">
    <property type="term" value="P:negative regulation of skeletal muscle cell proliferation"/>
    <property type="evidence" value="ECO:0007669"/>
    <property type="project" value="Ensembl"/>
</dbReference>
<dbReference type="GO" id="GO:0030512">
    <property type="term" value="P:negative regulation of transforming growth factor beta receptor signaling pathway"/>
    <property type="evidence" value="ECO:0007669"/>
    <property type="project" value="Ensembl"/>
</dbReference>
<dbReference type="GO" id="GO:0044794">
    <property type="term" value="P:positive regulation by host of viral process"/>
    <property type="evidence" value="ECO:0000315"/>
    <property type="project" value="AgBase"/>
</dbReference>
<dbReference type="GO" id="GO:0060161">
    <property type="term" value="P:positive regulation of dopamine receptor signaling pathway"/>
    <property type="evidence" value="ECO:0000315"/>
    <property type="project" value="BHF-UCL"/>
</dbReference>
<dbReference type="GO" id="GO:0001938">
    <property type="term" value="P:positive regulation of endothelial cell proliferation"/>
    <property type="evidence" value="ECO:0007669"/>
    <property type="project" value="Ensembl"/>
</dbReference>
<dbReference type="GO" id="GO:0043547">
    <property type="term" value="P:positive regulation of GTPase activity"/>
    <property type="evidence" value="ECO:0000314"/>
    <property type="project" value="BHF-UCL"/>
</dbReference>
<dbReference type="GO" id="GO:0043410">
    <property type="term" value="P:positive regulation of MAPK cascade"/>
    <property type="evidence" value="ECO:0000314"/>
    <property type="project" value="BHF-UCL"/>
</dbReference>
<dbReference type="GO" id="GO:0019065">
    <property type="term" value="P:receptor-mediated endocytosis of virus by host cell"/>
    <property type="evidence" value="ECO:0000316"/>
    <property type="project" value="CACAO"/>
</dbReference>
<dbReference type="GO" id="GO:0051480">
    <property type="term" value="P:regulation of cytosolic calcium ion concentration"/>
    <property type="evidence" value="ECO:0000318"/>
    <property type="project" value="GO_Central"/>
</dbReference>
<dbReference type="GO" id="GO:0007088">
    <property type="term" value="P:regulation of mitotic nuclear division"/>
    <property type="evidence" value="ECO:0000314"/>
    <property type="project" value="BHF-UCL"/>
</dbReference>
<dbReference type="GO" id="GO:0014856">
    <property type="term" value="P:skeletal muscle cell proliferation"/>
    <property type="evidence" value="ECO:0007669"/>
    <property type="project" value="Ensembl"/>
</dbReference>
<dbReference type="GO" id="GO:0048741">
    <property type="term" value="P:skeletal muscle fiber development"/>
    <property type="evidence" value="ECO:0000250"/>
    <property type="project" value="UniProtKB"/>
</dbReference>
<dbReference type="GO" id="GO:0007179">
    <property type="term" value="P:transforming growth factor beta receptor signaling pathway"/>
    <property type="evidence" value="ECO:0007669"/>
    <property type="project" value="Ensembl"/>
</dbReference>
<dbReference type="GO" id="GO:0048278">
    <property type="term" value="P:vesicle docking"/>
    <property type="evidence" value="ECO:0000314"/>
    <property type="project" value="BHF-UCL"/>
</dbReference>
<dbReference type="GO" id="GO:0006906">
    <property type="term" value="P:vesicle fusion"/>
    <property type="evidence" value="ECO:0000314"/>
    <property type="project" value="BHF-UCL"/>
</dbReference>
<dbReference type="GO" id="GO:0016050">
    <property type="term" value="P:vesicle organization"/>
    <property type="evidence" value="ECO:0000314"/>
    <property type="project" value="BHF-UCL"/>
</dbReference>
<dbReference type="GO" id="GO:0019076">
    <property type="term" value="P:viral release from host cell"/>
    <property type="evidence" value="ECO:0000315"/>
    <property type="project" value="AgBase"/>
</dbReference>
<dbReference type="InterPro" id="IPR001612">
    <property type="entry name" value="Caveolin"/>
</dbReference>
<dbReference type="InterPro" id="IPR018361">
    <property type="entry name" value="Caveolin_CS"/>
</dbReference>
<dbReference type="PANTHER" id="PTHR10844">
    <property type="entry name" value="CAVEOLIN"/>
    <property type="match status" value="1"/>
</dbReference>
<dbReference type="PANTHER" id="PTHR10844:SF3">
    <property type="entry name" value="CAVEOLIN-2"/>
    <property type="match status" value="1"/>
</dbReference>
<dbReference type="Pfam" id="PF01146">
    <property type="entry name" value="Caveolin"/>
    <property type="match status" value="1"/>
</dbReference>
<dbReference type="PROSITE" id="PS01210">
    <property type="entry name" value="CAVEOLIN"/>
    <property type="match status" value="1"/>
</dbReference>
<protein>
    <recommendedName>
        <fullName>Caveolin-2</fullName>
    </recommendedName>
</protein>
<keyword id="KW-0024">Alternative initiation</keyword>
<keyword id="KW-0025">Alternative splicing</keyword>
<keyword id="KW-1003">Cell membrane</keyword>
<keyword id="KW-0963">Cytoplasm</keyword>
<keyword id="KW-0333">Golgi apparatus</keyword>
<keyword id="KW-0472">Membrane</keyword>
<keyword id="KW-0539">Nucleus</keyword>
<keyword id="KW-0597">Phosphoprotein</keyword>
<keyword id="KW-1267">Proteomics identification</keyword>
<keyword id="KW-1185">Reference proteome</keyword>
<feature type="chain" id="PRO_0000004772" description="Caveolin-2">
    <location>
        <begin position="1"/>
        <end position="162"/>
    </location>
</feature>
<feature type="topological domain" description="Cytoplasmic" evidence="3">
    <location>
        <begin position="1"/>
        <end position="86"/>
    </location>
</feature>
<feature type="intramembrane region" description="Helical" evidence="3">
    <location>
        <begin position="87"/>
        <end position="107"/>
    </location>
</feature>
<feature type="topological domain" description="Cytoplasmic" evidence="3">
    <location>
        <begin position="108"/>
        <end position="162"/>
    </location>
</feature>
<feature type="modified residue" description="Phosphotyrosine; by SRC" evidence="4 5">
    <location>
        <position position="19"/>
    </location>
</feature>
<feature type="modified residue" description="Phosphoserine" evidence="2">
    <location>
        <position position="20"/>
    </location>
</feature>
<feature type="modified residue" description="Phosphoserine" evidence="6">
    <location>
        <position position="23"/>
    </location>
</feature>
<feature type="modified residue" description="Phosphotyrosine; by SRC" evidence="5">
    <location>
        <position position="27"/>
    </location>
</feature>
<feature type="modified residue" description="Phosphoserine" evidence="6">
    <location>
        <position position="36"/>
    </location>
</feature>
<feature type="splice variant" id="VSP_018696" description="In isoform Beta." evidence="9">
    <location>
        <begin position="1"/>
        <end position="13"/>
    </location>
</feature>
<feature type="splice variant" id="VSP_038114" description="In isoform C." evidence="8">
    <original>LGFEDVIAEPVTTHSFDKVWICSHALFEISKYVMYKFLTVFLAIPLAFIAGILFATLSCLHI</original>
    <variation>DFNAFCKDLPNGSAFSADNMEECDRCYHCSIVYERRTMLLFCQPATEPGLNTWTPGLEIGIL</variation>
    <location>
        <begin position="51"/>
        <end position="112"/>
    </location>
</feature>
<feature type="splice variant" id="VSP_038115" description="In isoform C." evidence="8">
    <location>
        <begin position="113"/>
        <end position="162"/>
    </location>
</feature>
<feature type="sequence variant" id="VAR_012071" description="In dbSNP:rs8940.">
    <original>Q</original>
    <variation>E</variation>
    <location>
        <position position="130"/>
    </location>
</feature>
<feature type="mutagenesis site" description="Greatly reduced Src-mediated phosphorylation and binding of RASA1, SRC and NCK1. Completely eliminates Src-mediated tyrosine phosphorylation and binding to RASA1, SRC and NCK1; when associated with A-27." evidence="5">
    <original>Y</original>
    <variation>A</variation>
    <location>
        <position position="19"/>
    </location>
</feature>
<feature type="mutagenesis site" description="Abolishes phosphorylation." evidence="6">
    <original>S</original>
    <variation>A</variation>
    <location>
        <position position="23"/>
    </location>
</feature>
<feature type="mutagenesis site" description="Greatly reduced Src-mediated phosphorylation and binding of RASA1, SRC and NCK1. Completely eliminates Src-mediated phosphorylation and binding of RASA1, SRC and NCK1; when associated with A-19." evidence="5">
    <original>Y</original>
    <variation>A</variation>
    <location>
        <position position="27"/>
    </location>
</feature>
<feature type="mutagenesis site" description="Abolishes phosphorylation." evidence="6">
    <original>S</original>
    <variation>A</variation>
    <location>
        <position position="36"/>
    </location>
</feature>
<gene>
    <name type="primary">CAV2</name>
</gene>